<organism>
    <name type="scientific">Pectobacterium carotovorum subsp. carotovorum (strain PC1)</name>
    <dbReference type="NCBI Taxonomy" id="561230"/>
    <lineage>
        <taxon>Bacteria</taxon>
        <taxon>Pseudomonadati</taxon>
        <taxon>Pseudomonadota</taxon>
        <taxon>Gammaproteobacteria</taxon>
        <taxon>Enterobacterales</taxon>
        <taxon>Pectobacteriaceae</taxon>
        <taxon>Pectobacterium</taxon>
    </lineage>
</organism>
<feature type="chain" id="PRO_1000215494" description="Phosphoglucosamine mutase">
    <location>
        <begin position="1"/>
        <end position="445"/>
    </location>
</feature>
<feature type="active site" description="Phosphoserine intermediate" evidence="1">
    <location>
        <position position="102"/>
    </location>
</feature>
<feature type="binding site" description="via phosphate group" evidence="1">
    <location>
        <position position="102"/>
    </location>
    <ligand>
        <name>Mg(2+)</name>
        <dbReference type="ChEBI" id="CHEBI:18420"/>
    </ligand>
</feature>
<feature type="binding site" evidence="1">
    <location>
        <position position="241"/>
    </location>
    <ligand>
        <name>Mg(2+)</name>
        <dbReference type="ChEBI" id="CHEBI:18420"/>
    </ligand>
</feature>
<feature type="binding site" evidence="1">
    <location>
        <position position="243"/>
    </location>
    <ligand>
        <name>Mg(2+)</name>
        <dbReference type="ChEBI" id="CHEBI:18420"/>
    </ligand>
</feature>
<feature type="binding site" evidence="1">
    <location>
        <position position="245"/>
    </location>
    <ligand>
        <name>Mg(2+)</name>
        <dbReference type="ChEBI" id="CHEBI:18420"/>
    </ligand>
</feature>
<feature type="modified residue" description="Phosphoserine" evidence="1">
    <location>
        <position position="102"/>
    </location>
</feature>
<reference key="1">
    <citation type="submission" date="2009-07" db="EMBL/GenBank/DDBJ databases">
        <title>Complete sequence of Pectobacterium carotovorum subsp. carotovorum PC1.</title>
        <authorList>
            <consortium name="US DOE Joint Genome Institute"/>
            <person name="Lucas S."/>
            <person name="Copeland A."/>
            <person name="Lapidus A."/>
            <person name="Glavina del Rio T."/>
            <person name="Tice H."/>
            <person name="Bruce D."/>
            <person name="Goodwin L."/>
            <person name="Pitluck S."/>
            <person name="Munk A.C."/>
            <person name="Brettin T."/>
            <person name="Detter J.C."/>
            <person name="Han C."/>
            <person name="Tapia R."/>
            <person name="Larimer F."/>
            <person name="Land M."/>
            <person name="Hauser L."/>
            <person name="Kyrpides N."/>
            <person name="Mikhailova N."/>
            <person name="Balakrishnan V."/>
            <person name="Glasner J."/>
            <person name="Perna N.T."/>
        </authorList>
    </citation>
    <scope>NUCLEOTIDE SEQUENCE [LARGE SCALE GENOMIC DNA]</scope>
    <source>
        <strain>PC1</strain>
    </source>
</reference>
<keyword id="KW-0413">Isomerase</keyword>
<keyword id="KW-0460">Magnesium</keyword>
<keyword id="KW-0479">Metal-binding</keyword>
<keyword id="KW-0597">Phosphoprotein</keyword>
<accession>C6DKI6</accession>
<proteinExistence type="inferred from homology"/>
<name>GLMM_PECCP</name>
<sequence>MSNRKYFGTDGVRGKVGDTPITPDFVLKLGWAAGKVLARHGSRKIIIGKDTRISGYMLESALEAGLAAAGLSASFTGPMPTPAVAYLTRTFRAEAGIVISASHNPYYDNGIKFFSIDGTKLPDEVEEAIEAELEKPLTCVESAELGKASRIVDAAGRYIEFCKGTFPSELSLNGLKIVVDCANGATYHIAPSVLRELGAKVIAIGCEPDGMNINEECGATDVRQLQARVLAEKADVGLAFDGDGDRLIMVDHLGNKVDGDQILYIIAREGLRQGQLRGGAVGTLMSNMGLEVALKQLGIPFARAKVGDRYVLEMMQAKGWRIGAENSGHVILLDKTTTGDGVIAGLQVLTAIVRNHMSLHDLCSGMKLFPQILVNVRFTGENDPLEDKKVQQITQDVEKELAGRGRVLLRKSGTEPLIRVMVEGEHEETVIALANRIADAVKAAG</sequence>
<dbReference type="EC" id="5.4.2.10" evidence="1"/>
<dbReference type="EMBL" id="CP001657">
    <property type="protein sequence ID" value="ACT11623.1"/>
    <property type="molecule type" value="Genomic_DNA"/>
</dbReference>
<dbReference type="RefSeq" id="WP_012773271.1">
    <property type="nucleotide sequence ID" value="NC_012917.1"/>
</dbReference>
<dbReference type="SMR" id="C6DKI6"/>
<dbReference type="STRING" id="561230.PC1_0568"/>
<dbReference type="KEGG" id="pct:PC1_0568"/>
<dbReference type="eggNOG" id="COG1109">
    <property type="taxonomic scope" value="Bacteria"/>
</dbReference>
<dbReference type="HOGENOM" id="CLU_016950_7_0_6"/>
<dbReference type="OrthoDB" id="9803322at2"/>
<dbReference type="Proteomes" id="UP000002736">
    <property type="component" value="Chromosome"/>
</dbReference>
<dbReference type="GO" id="GO:0005829">
    <property type="term" value="C:cytosol"/>
    <property type="evidence" value="ECO:0007669"/>
    <property type="project" value="TreeGrafter"/>
</dbReference>
<dbReference type="GO" id="GO:0000287">
    <property type="term" value="F:magnesium ion binding"/>
    <property type="evidence" value="ECO:0007669"/>
    <property type="project" value="UniProtKB-UniRule"/>
</dbReference>
<dbReference type="GO" id="GO:0008966">
    <property type="term" value="F:phosphoglucosamine mutase activity"/>
    <property type="evidence" value="ECO:0007669"/>
    <property type="project" value="UniProtKB-UniRule"/>
</dbReference>
<dbReference type="GO" id="GO:0004615">
    <property type="term" value="F:phosphomannomutase activity"/>
    <property type="evidence" value="ECO:0007669"/>
    <property type="project" value="TreeGrafter"/>
</dbReference>
<dbReference type="GO" id="GO:0005975">
    <property type="term" value="P:carbohydrate metabolic process"/>
    <property type="evidence" value="ECO:0007669"/>
    <property type="project" value="InterPro"/>
</dbReference>
<dbReference type="GO" id="GO:0009252">
    <property type="term" value="P:peptidoglycan biosynthetic process"/>
    <property type="evidence" value="ECO:0007669"/>
    <property type="project" value="TreeGrafter"/>
</dbReference>
<dbReference type="GO" id="GO:0006048">
    <property type="term" value="P:UDP-N-acetylglucosamine biosynthetic process"/>
    <property type="evidence" value="ECO:0007669"/>
    <property type="project" value="TreeGrafter"/>
</dbReference>
<dbReference type="CDD" id="cd05802">
    <property type="entry name" value="GlmM"/>
    <property type="match status" value="1"/>
</dbReference>
<dbReference type="FunFam" id="3.30.310.50:FF:000001">
    <property type="entry name" value="Phosphoglucosamine mutase"/>
    <property type="match status" value="1"/>
</dbReference>
<dbReference type="FunFam" id="3.40.120.10:FF:000001">
    <property type="entry name" value="Phosphoglucosamine mutase"/>
    <property type="match status" value="1"/>
</dbReference>
<dbReference type="FunFam" id="3.40.120.10:FF:000003">
    <property type="entry name" value="Phosphoglucosamine mutase"/>
    <property type="match status" value="1"/>
</dbReference>
<dbReference type="Gene3D" id="3.40.120.10">
    <property type="entry name" value="Alpha-D-Glucose-1,6-Bisphosphate, subunit A, domain 3"/>
    <property type="match status" value="3"/>
</dbReference>
<dbReference type="Gene3D" id="3.30.310.50">
    <property type="entry name" value="Alpha-D-phosphohexomutase, C-terminal domain"/>
    <property type="match status" value="1"/>
</dbReference>
<dbReference type="HAMAP" id="MF_01554_B">
    <property type="entry name" value="GlmM_B"/>
    <property type="match status" value="1"/>
</dbReference>
<dbReference type="InterPro" id="IPR005844">
    <property type="entry name" value="A-D-PHexomutase_a/b/a-I"/>
</dbReference>
<dbReference type="InterPro" id="IPR016055">
    <property type="entry name" value="A-D-PHexomutase_a/b/a-I/II/III"/>
</dbReference>
<dbReference type="InterPro" id="IPR005845">
    <property type="entry name" value="A-D-PHexomutase_a/b/a-II"/>
</dbReference>
<dbReference type="InterPro" id="IPR005846">
    <property type="entry name" value="A-D-PHexomutase_a/b/a-III"/>
</dbReference>
<dbReference type="InterPro" id="IPR005843">
    <property type="entry name" value="A-D-PHexomutase_C"/>
</dbReference>
<dbReference type="InterPro" id="IPR036900">
    <property type="entry name" value="A-D-PHexomutase_C_sf"/>
</dbReference>
<dbReference type="InterPro" id="IPR016066">
    <property type="entry name" value="A-D-PHexomutase_CS"/>
</dbReference>
<dbReference type="InterPro" id="IPR005841">
    <property type="entry name" value="Alpha-D-phosphohexomutase_SF"/>
</dbReference>
<dbReference type="InterPro" id="IPR006352">
    <property type="entry name" value="GlmM_bact"/>
</dbReference>
<dbReference type="InterPro" id="IPR050060">
    <property type="entry name" value="Phosphoglucosamine_mutase"/>
</dbReference>
<dbReference type="NCBIfam" id="TIGR01455">
    <property type="entry name" value="glmM"/>
    <property type="match status" value="1"/>
</dbReference>
<dbReference type="NCBIfam" id="NF008139">
    <property type="entry name" value="PRK10887.1"/>
    <property type="match status" value="1"/>
</dbReference>
<dbReference type="PANTHER" id="PTHR42946:SF1">
    <property type="entry name" value="PHOSPHOGLUCOMUTASE (ALPHA-D-GLUCOSE-1,6-BISPHOSPHATE-DEPENDENT)"/>
    <property type="match status" value="1"/>
</dbReference>
<dbReference type="PANTHER" id="PTHR42946">
    <property type="entry name" value="PHOSPHOHEXOSE MUTASE"/>
    <property type="match status" value="1"/>
</dbReference>
<dbReference type="Pfam" id="PF02878">
    <property type="entry name" value="PGM_PMM_I"/>
    <property type="match status" value="1"/>
</dbReference>
<dbReference type="Pfam" id="PF02879">
    <property type="entry name" value="PGM_PMM_II"/>
    <property type="match status" value="1"/>
</dbReference>
<dbReference type="Pfam" id="PF02880">
    <property type="entry name" value="PGM_PMM_III"/>
    <property type="match status" value="1"/>
</dbReference>
<dbReference type="Pfam" id="PF00408">
    <property type="entry name" value="PGM_PMM_IV"/>
    <property type="match status" value="1"/>
</dbReference>
<dbReference type="PRINTS" id="PR00509">
    <property type="entry name" value="PGMPMM"/>
</dbReference>
<dbReference type="SUPFAM" id="SSF55957">
    <property type="entry name" value="Phosphoglucomutase, C-terminal domain"/>
    <property type="match status" value="1"/>
</dbReference>
<dbReference type="SUPFAM" id="SSF53738">
    <property type="entry name" value="Phosphoglucomutase, first 3 domains"/>
    <property type="match status" value="3"/>
</dbReference>
<dbReference type="PROSITE" id="PS00710">
    <property type="entry name" value="PGM_PMM"/>
    <property type="match status" value="1"/>
</dbReference>
<gene>
    <name evidence="1" type="primary">glmM</name>
    <name type="ordered locus">PC1_0568</name>
</gene>
<evidence type="ECO:0000255" key="1">
    <source>
        <dbReference type="HAMAP-Rule" id="MF_01554"/>
    </source>
</evidence>
<comment type="function">
    <text evidence="1">Catalyzes the conversion of glucosamine-6-phosphate to glucosamine-1-phosphate.</text>
</comment>
<comment type="catalytic activity">
    <reaction evidence="1">
        <text>alpha-D-glucosamine 1-phosphate = D-glucosamine 6-phosphate</text>
        <dbReference type="Rhea" id="RHEA:23424"/>
        <dbReference type="ChEBI" id="CHEBI:58516"/>
        <dbReference type="ChEBI" id="CHEBI:58725"/>
        <dbReference type="EC" id="5.4.2.10"/>
    </reaction>
</comment>
<comment type="cofactor">
    <cofactor evidence="1">
        <name>Mg(2+)</name>
        <dbReference type="ChEBI" id="CHEBI:18420"/>
    </cofactor>
    <text evidence="1">Binds 1 Mg(2+) ion per subunit.</text>
</comment>
<comment type="PTM">
    <text evidence="1">Activated by phosphorylation.</text>
</comment>
<comment type="similarity">
    <text evidence="1">Belongs to the phosphohexose mutase family.</text>
</comment>
<protein>
    <recommendedName>
        <fullName evidence="1">Phosphoglucosamine mutase</fullName>
        <ecNumber evidence="1">5.4.2.10</ecNumber>
    </recommendedName>
</protein>